<accession>P18054</accession>
<accession>O95569</accession>
<accession>Q6ISF8</accession>
<accession>Q9UQM4</accession>
<organism>
    <name type="scientific">Homo sapiens</name>
    <name type="common">Human</name>
    <dbReference type="NCBI Taxonomy" id="9606"/>
    <lineage>
        <taxon>Eukaryota</taxon>
        <taxon>Metazoa</taxon>
        <taxon>Chordata</taxon>
        <taxon>Craniata</taxon>
        <taxon>Vertebrata</taxon>
        <taxon>Euteleostomi</taxon>
        <taxon>Mammalia</taxon>
        <taxon>Eutheria</taxon>
        <taxon>Euarchontoglires</taxon>
        <taxon>Primates</taxon>
        <taxon>Haplorrhini</taxon>
        <taxon>Catarrhini</taxon>
        <taxon>Hominidae</taxon>
        <taxon>Homo</taxon>
    </lineage>
</organism>
<proteinExistence type="evidence at protein level"/>
<dbReference type="EC" id="1.13.11.-" evidence="10"/>
<dbReference type="EC" id="1.13.11.31" evidence="10 17 21 26"/>
<dbReference type="EC" id="1.13.11.33" evidence="10"/>
<dbReference type="EC" id="3.3.2.-"/>
<dbReference type="EMBL" id="M62982">
    <property type="protein sequence ID" value="AAA51533.1"/>
    <property type="molecule type" value="mRNA"/>
</dbReference>
<dbReference type="EMBL" id="M35418">
    <property type="protein sequence ID" value="AAA60056.1"/>
    <property type="molecule type" value="mRNA"/>
</dbReference>
<dbReference type="EMBL" id="M58704">
    <property type="protein sequence ID" value="AAA59523.1"/>
    <property type="molecule type" value="mRNA"/>
</dbReference>
<dbReference type="EMBL" id="AY527817">
    <property type="protein sequence ID" value="AAS00094.1"/>
    <property type="molecule type" value="Genomic_DNA"/>
</dbReference>
<dbReference type="EMBL" id="AC040977">
    <property type="status" value="NOT_ANNOTATED_CDS"/>
    <property type="molecule type" value="Genomic_DNA"/>
</dbReference>
<dbReference type="EMBL" id="BC069557">
    <property type="protein sequence ID" value="AAH69557.1"/>
    <property type="molecule type" value="mRNA"/>
</dbReference>
<dbReference type="EMBL" id="D12638">
    <property type="protein sequence ID" value="BAA02162.1"/>
    <property type="molecule type" value="Genomic_DNA"/>
</dbReference>
<dbReference type="EMBL" id="M87004">
    <property type="protein sequence ID" value="AAA51587.1"/>
    <property type="molecule type" value="Genomic_DNA"/>
</dbReference>
<dbReference type="EMBL" id="S68587">
    <property type="protein sequence ID" value="AAD14020.1"/>
    <property type="molecule type" value="mRNA"/>
</dbReference>
<dbReference type="EMBL" id="AF143883">
    <property type="protein sequence ID" value="AAD32700.1"/>
    <property type="molecule type" value="mRNA"/>
</dbReference>
<dbReference type="CCDS" id="CCDS11084.1"/>
<dbReference type="PIR" id="A38283">
    <property type="entry name" value="A38283"/>
</dbReference>
<dbReference type="RefSeq" id="NP_000688.2">
    <property type="nucleotide sequence ID" value="NM_000697.3"/>
</dbReference>
<dbReference type="PDB" id="3D3L">
    <property type="method" value="X-ray"/>
    <property type="resolution" value="2.60 A"/>
    <property type="chains" value="A/B=172-663"/>
</dbReference>
<dbReference type="PDB" id="8GHB">
    <property type="method" value="EM"/>
    <property type="resolution" value="2.76 A"/>
    <property type="chains" value="A=2-663"/>
</dbReference>
<dbReference type="PDB" id="8GHC">
    <property type="method" value="EM"/>
    <property type="resolution" value="2.30 A"/>
    <property type="chains" value="A/B=2-663"/>
</dbReference>
<dbReference type="PDB" id="8GHD">
    <property type="method" value="EM"/>
    <property type="resolution" value="2.20 A"/>
    <property type="chains" value="A/B/C/D/E/F=2-663"/>
</dbReference>
<dbReference type="PDB" id="8GHE">
    <property type="method" value="EM"/>
    <property type="resolution" value="2.05 A"/>
    <property type="chains" value="A/B/C/D=2-663"/>
</dbReference>
<dbReference type="PDBsum" id="3D3L"/>
<dbReference type="PDBsum" id="8GHB"/>
<dbReference type="PDBsum" id="8GHC"/>
<dbReference type="PDBsum" id="8GHD"/>
<dbReference type="PDBsum" id="8GHE"/>
<dbReference type="EMDB" id="EMD-40039"/>
<dbReference type="EMDB" id="EMD-40040"/>
<dbReference type="EMDB" id="EMD-40041"/>
<dbReference type="EMDB" id="EMD-40042"/>
<dbReference type="SMR" id="P18054"/>
<dbReference type="BioGRID" id="106740">
    <property type="interactions" value="12"/>
</dbReference>
<dbReference type="FunCoup" id="P18054">
    <property type="interactions" value="201"/>
</dbReference>
<dbReference type="IntAct" id="P18054">
    <property type="interactions" value="4"/>
</dbReference>
<dbReference type="MINT" id="P18054"/>
<dbReference type="STRING" id="9606.ENSP00000251535"/>
<dbReference type="BindingDB" id="P18054"/>
<dbReference type="ChEMBL" id="CHEMBL3687"/>
<dbReference type="DrugCentral" id="P18054"/>
<dbReference type="GuidetoPHARMACOLOGY" id="1387"/>
<dbReference type="SwissLipids" id="SLP:000000670"/>
<dbReference type="GlyGen" id="P18054">
    <property type="glycosylation" value="2 sites, 1 O-linked glycan (1 site)"/>
</dbReference>
<dbReference type="iPTMnet" id="P18054"/>
<dbReference type="PhosphoSitePlus" id="P18054"/>
<dbReference type="BioMuta" id="ALOX12"/>
<dbReference type="DMDM" id="125987838"/>
<dbReference type="MassIVE" id="P18054"/>
<dbReference type="PaxDb" id="9606-ENSP00000251535"/>
<dbReference type="PeptideAtlas" id="P18054"/>
<dbReference type="ProteomicsDB" id="53540"/>
<dbReference type="ABCD" id="P18054">
    <property type="antibodies" value="3 sequenced antibodies"/>
</dbReference>
<dbReference type="Antibodypedia" id="2760">
    <property type="antibodies" value="236 antibodies from 28 providers"/>
</dbReference>
<dbReference type="DNASU" id="239"/>
<dbReference type="Ensembl" id="ENST00000251535.11">
    <property type="protein sequence ID" value="ENSP00000251535.6"/>
    <property type="gene ID" value="ENSG00000108839.12"/>
</dbReference>
<dbReference type="GeneID" id="239"/>
<dbReference type="KEGG" id="hsa:239"/>
<dbReference type="MANE-Select" id="ENST00000251535.11">
    <property type="protein sequence ID" value="ENSP00000251535.6"/>
    <property type="RefSeq nucleotide sequence ID" value="NM_000697.3"/>
    <property type="RefSeq protein sequence ID" value="NP_000688.2"/>
</dbReference>
<dbReference type="UCSC" id="uc002gdx.4">
    <property type="organism name" value="human"/>
</dbReference>
<dbReference type="AGR" id="HGNC:429"/>
<dbReference type="CTD" id="239"/>
<dbReference type="DisGeNET" id="239"/>
<dbReference type="GeneCards" id="ALOX12"/>
<dbReference type="HGNC" id="HGNC:429">
    <property type="gene designation" value="ALOX12"/>
</dbReference>
<dbReference type="HPA" id="ENSG00000108839">
    <property type="expression patterns" value="Tissue enhanced (cervix, esophagus, vagina)"/>
</dbReference>
<dbReference type="MIM" id="114500">
    <property type="type" value="phenotype"/>
</dbReference>
<dbReference type="MIM" id="133239">
    <property type="type" value="phenotype"/>
</dbReference>
<dbReference type="MIM" id="152391">
    <property type="type" value="gene"/>
</dbReference>
<dbReference type="neXtProt" id="NX_P18054"/>
<dbReference type="OpenTargets" id="ENSG00000108839"/>
<dbReference type="PharmGKB" id="PA45"/>
<dbReference type="VEuPathDB" id="HostDB:ENSG00000108839"/>
<dbReference type="eggNOG" id="ENOG502QQSP">
    <property type="taxonomic scope" value="Eukaryota"/>
</dbReference>
<dbReference type="GeneTree" id="ENSGT00940000155191"/>
<dbReference type="HOGENOM" id="CLU_004282_3_3_1"/>
<dbReference type="InParanoid" id="P18054"/>
<dbReference type="OMA" id="NNGQYDW"/>
<dbReference type="OrthoDB" id="407298at2759"/>
<dbReference type="PAN-GO" id="P18054">
    <property type="GO annotations" value="10 GO annotations based on evolutionary models"/>
</dbReference>
<dbReference type="PhylomeDB" id="P18054"/>
<dbReference type="TreeFam" id="TF105320"/>
<dbReference type="BioCyc" id="MetaCyc:HS03167-MONOMER"/>
<dbReference type="BRENDA" id="1.13.11.31">
    <property type="organism ID" value="2681"/>
</dbReference>
<dbReference type="PathwayCommons" id="P18054"/>
<dbReference type="Reactome" id="R-HSA-2142696">
    <property type="pathway name" value="Synthesis of Hepoxilins (HX) and Trioxilins (TrX)"/>
</dbReference>
<dbReference type="Reactome" id="R-HSA-2142700">
    <property type="pathway name" value="Biosynthesis of Lipoxins (LX)"/>
</dbReference>
<dbReference type="Reactome" id="R-HSA-2142712">
    <property type="pathway name" value="Synthesis of 12-eicosatetraenoic acid derivatives"/>
</dbReference>
<dbReference type="Reactome" id="R-HSA-9018677">
    <property type="pathway name" value="Biosynthesis of DHA-derived SPMs"/>
</dbReference>
<dbReference type="Reactome" id="R-HSA-9025106">
    <property type="pathway name" value="Biosynthesis of DPAn-6 SPMs"/>
</dbReference>
<dbReference type="Reactome" id="R-HSA-9026290">
    <property type="pathway name" value="Biosynthesis of DPAn-3-derived maresins"/>
</dbReference>
<dbReference type="SABIO-RK" id="P18054"/>
<dbReference type="SignaLink" id="P18054"/>
<dbReference type="UniPathway" id="UPA00881"/>
<dbReference type="BioGRID-ORCS" id="239">
    <property type="hits" value="9 hits in 1152 CRISPR screens"/>
</dbReference>
<dbReference type="ChiTaRS" id="ALOX12">
    <property type="organism name" value="human"/>
</dbReference>
<dbReference type="EvolutionaryTrace" id="P18054"/>
<dbReference type="GeneWiki" id="ALOX12"/>
<dbReference type="GenomeRNAi" id="239"/>
<dbReference type="Pharos" id="P18054">
    <property type="development level" value="Tchem"/>
</dbReference>
<dbReference type="PRO" id="PR:P18054"/>
<dbReference type="Proteomes" id="UP000005640">
    <property type="component" value="Chromosome 17"/>
</dbReference>
<dbReference type="RNAct" id="P18054">
    <property type="molecule type" value="protein"/>
</dbReference>
<dbReference type="Bgee" id="ENSG00000108839">
    <property type="expression patterns" value="Expressed in lower esophagus mucosa and 116 other cell types or tissues"/>
</dbReference>
<dbReference type="ExpressionAtlas" id="P18054">
    <property type="expression patterns" value="baseline and differential"/>
</dbReference>
<dbReference type="GO" id="GO:0005737">
    <property type="term" value="C:cytoplasm"/>
    <property type="evidence" value="ECO:0000314"/>
    <property type="project" value="UniProtKB"/>
</dbReference>
<dbReference type="GO" id="GO:0005829">
    <property type="term" value="C:cytosol"/>
    <property type="evidence" value="ECO:0000314"/>
    <property type="project" value="UniProtKB"/>
</dbReference>
<dbReference type="GO" id="GO:0070062">
    <property type="term" value="C:extracellular exosome"/>
    <property type="evidence" value="ECO:0007005"/>
    <property type="project" value="UniProtKB"/>
</dbReference>
<dbReference type="GO" id="GO:0016020">
    <property type="term" value="C:membrane"/>
    <property type="evidence" value="ECO:0000314"/>
    <property type="project" value="UniProtKB"/>
</dbReference>
<dbReference type="GO" id="GO:0042383">
    <property type="term" value="C:sarcolemma"/>
    <property type="evidence" value="ECO:0000314"/>
    <property type="project" value="UniProtKB"/>
</dbReference>
<dbReference type="GO" id="GO:0004052">
    <property type="term" value="F:arachidonate 12(S)-lipoxygenase activity"/>
    <property type="evidence" value="ECO:0000314"/>
    <property type="project" value="UniProtKB"/>
</dbReference>
<dbReference type="GO" id="GO:0050473">
    <property type="term" value="F:arachidonate 15-lipoxygenase activity"/>
    <property type="evidence" value="ECO:0000314"/>
    <property type="project" value="UniProtKB"/>
</dbReference>
<dbReference type="GO" id="GO:0047977">
    <property type="term" value="F:hepoxilin-epoxide hydrolase activity"/>
    <property type="evidence" value="ECO:0000250"/>
    <property type="project" value="UniProtKB"/>
</dbReference>
<dbReference type="GO" id="GO:0005506">
    <property type="term" value="F:iron ion binding"/>
    <property type="evidence" value="ECO:0007669"/>
    <property type="project" value="InterPro"/>
</dbReference>
<dbReference type="GO" id="GO:0016165">
    <property type="term" value="F:linoleate 13S-lipoxygenase activity"/>
    <property type="evidence" value="ECO:0000314"/>
    <property type="project" value="UniProtKB"/>
</dbReference>
<dbReference type="GO" id="GO:0019369">
    <property type="term" value="P:arachidonate metabolic process"/>
    <property type="evidence" value="ECO:0000314"/>
    <property type="project" value="UniProtKB"/>
</dbReference>
<dbReference type="GO" id="GO:0061436">
    <property type="term" value="P:establishment of skin barrier"/>
    <property type="evidence" value="ECO:0000250"/>
    <property type="project" value="UniProtKB"/>
</dbReference>
<dbReference type="GO" id="GO:0019395">
    <property type="term" value="P:fatty acid oxidation"/>
    <property type="evidence" value="ECO:0000314"/>
    <property type="project" value="UniProtKB"/>
</dbReference>
<dbReference type="GO" id="GO:0051122">
    <property type="term" value="P:hepoxilin biosynthetic process"/>
    <property type="evidence" value="ECO:0000250"/>
    <property type="project" value="UniProtKB"/>
</dbReference>
<dbReference type="GO" id="GO:1901751">
    <property type="term" value="P:leukotriene A4 metabolic process"/>
    <property type="evidence" value="ECO:0000314"/>
    <property type="project" value="UniProtKB"/>
</dbReference>
<dbReference type="GO" id="GO:0043651">
    <property type="term" value="P:linoleic acid metabolic process"/>
    <property type="evidence" value="ECO:0000314"/>
    <property type="project" value="UniProtKB"/>
</dbReference>
<dbReference type="GO" id="GO:0006629">
    <property type="term" value="P:lipid metabolic process"/>
    <property type="evidence" value="ECO:0000314"/>
    <property type="project" value="UniProtKB"/>
</dbReference>
<dbReference type="GO" id="GO:0034440">
    <property type="term" value="P:lipid oxidation"/>
    <property type="evidence" value="ECO:0000318"/>
    <property type="project" value="GO_Central"/>
</dbReference>
<dbReference type="GO" id="GO:2001303">
    <property type="term" value="P:lipoxin A4 biosynthetic process"/>
    <property type="evidence" value="ECO:0000314"/>
    <property type="project" value="UniProtKB"/>
</dbReference>
<dbReference type="GO" id="GO:2001306">
    <property type="term" value="P:lipoxin B4 biosynthetic process"/>
    <property type="evidence" value="ECO:0000314"/>
    <property type="project" value="UniProtKB"/>
</dbReference>
<dbReference type="GO" id="GO:0019372">
    <property type="term" value="P:lipoxygenase pathway"/>
    <property type="evidence" value="ECO:0000314"/>
    <property type="project" value="UniProtKB"/>
</dbReference>
<dbReference type="GO" id="GO:0010656">
    <property type="term" value="P:negative regulation of muscle cell apoptotic process"/>
    <property type="evidence" value="ECO:0000315"/>
    <property type="project" value="UniProtKB"/>
</dbReference>
<dbReference type="GO" id="GO:0090331">
    <property type="term" value="P:negative regulation of platelet aggregation"/>
    <property type="evidence" value="ECO:0000250"/>
    <property type="project" value="UniProtKB"/>
</dbReference>
<dbReference type="GO" id="GO:0042554">
    <property type="term" value="P:superoxide anion generation"/>
    <property type="evidence" value="ECO:0000303"/>
    <property type="project" value="UniProtKB"/>
</dbReference>
<dbReference type="GO" id="GO:0033559">
    <property type="term" value="P:unsaturated fatty acid metabolic process"/>
    <property type="evidence" value="ECO:0000314"/>
    <property type="project" value="UniProtKB"/>
</dbReference>
<dbReference type="CDD" id="cd01753">
    <property type="entry name" value="PLAT_LOX"/>
    <property type="match status" value="1"/>
</dbReference>
<dbReference type="FunFam" id="3.10.450.60:FF:000004">
    <property type="entry name" value="Arachidonate 12-lipoxygenase, 12S-type"/>
    <property type="match status" value="1"/>
</dbReference>
<dbReference type="FunFam" id="1.20.245.10:FF:000001">
    <property type="entry name" value="Arachidonate 5-lipoxygenase a"/>
    <property type="match status" value="1"/>
</dbReference>
<dbReference type="FunFam" id="2.60.60.20:FF:000002">
    <property type="entry name" value="Arachidonate 5-lipoxygenase a"/>
    <property type="match status" value="1"/>
</dbReference>
<dbReference type="Gene3D" id="3.10.450.60">
    <property type="match status" value="1"/>
</dbReference>
<dbReference type="Gene3D" id="1.20.245.10">
    <property type="entry name" value="Lipoxygenase-1, Domain 5"/>
    <property type="match status" value="1"/>
</dbReference>
<dbReference type="Gene3D" id="2.60.60.20">
    <property type="entry name" value="PLAT/LH2 domain"/>
    <property type="match status" value="1"/>
</dbReference>
<dbReference type="InterPro" id="IPR000907">
    <property type="entry name" value="LipOase"/>
</dbReference>
<dbReference type="InterPro" id="IPR013819">
    <property type="entry name" value="LipOase_C"/>
</dbReference>
<dbReference type="InterPro" id="IPR036226">
    <property type="entry name" value="LipOase_C_sf"/>
</dbReference>
<dbReference type="InterPro" id="IPR020834">
    <property type="entry name" value="LipOase_CS"/>
</dbReference>
<dbReference type="InterPro" id="IPR020833">
    <property type="entry name" value="LipOase_Fe_BS"/>
</dbReference>
<dbReference type="InterPro" id="IPR001885">
    <property type="entry name" value="LipOase_mml"/>
</dbReference>
<dbReference type="InterPro" id="IPR001024">
    <property type="entry name" value="PLAT/LH2_dom"/>
</dbReference>
<dbReference type="InterPro" id="IPR036392">
    <property type="entry name" value="PLAT/LH2_dom_sf"/>
</dbReference>
<dbReference type="InterPro" id="IPR042062">
    <property type="entry name" value="PLAT_LOX_verte"/>
</dbReference>
<dbReference type="PANTHER" id="PTHR11771">
    <property type="entry name" value="LIPOXYGENASE"/>
    <property type="match status" value="1"/>
</dbReference>
<dbReference type="Pfam" id="PF00305">
    <property type="entry name" value="Lipoxygenase"/>
    <property type="match status" value="1"/>
</dbReference>
<dbReference type="Pfam" id="PF01477">
    <property type="entry name" value="PLAT"/>
    <property type="match status" value="1"/>
</dbReference>
<dbReference type="PRINTS" id="PR00087">
    <property type="entry name" value="LIPOXYGENASE"/>
</dbReference>
<dbReference type="PRINTS" id="PR00467">
    <property type="entry name" value="MAMLPOXGNASE"/>
</dbReference>
<dbReference type="SMART" id="SM00308">
    <property type="entry name" value="LH2"/>
    <property type="match status" value="1"/>
</dbReference>
<dbReference type="SUPFAM" id="SSF49723">
    <property type="entry name" value="Lipase/lipooxygenase domain (PLAT/LH2 domain)"/>
    <property type="match status" value="1"/>
</dbReference>
<dbReference type="SUPFAM" id="SSF48484">
    <property type="entry name" value="Lipoxigenase"/>
    <property type="match status" value="1"/>
</dbReference>
<dbReference type="PROSITE" id="PS00711">
    <property type="entry name" value="LIPOXYGENASE_1"/>
    <property type="match status" value="1"/>
</dbReference>
<dbReference type="PROSITE" id="PS00081">
    <property type="entry name" value="LIPOXYGENASE_2"/>
    <property type="match status" value="1"/>
</dbReference>
<dbReference type="PROSITE" id="PS51393">
    <property type="entry name" value="LIPOXYGENASE_3"/>
    <property type="match status" value="1"/>
</dbReference>
<dbReference type="PROSITE" id="PS50095">
    <property type="entry name" value="PLAT"/>
    <property type="match status" value="1"/>
</dbReference>
<name>LOX12_HUMAN</name>
<gene>
    <name evidence="39" type="primary">ALOX12</name>
    <name type="synonym">12LO</name>
    <name type="synonym">LOG12</name>
</gene>
<reference key="1">
    <citation type="journal article" date="1990" name="Biochem. Biophys. Res. Commun.">
        <title>Molecular cloning and expression of human arachidonate 12-lipoxygenase.</title>
        <authorList>
            <person name="Yoshimoto T."/>
            <person name="Yamamoto Y."/>
            <person name="Arakawa T."/>
            <person name="Suzuki H."/>
            <person name="Yamamoto S."/>
            <person name="Yokoyama C."/>
            <person name="Tanabe T."/>
            <person name="Toh H."/>
        </authorList>
    </citation>
    <scope>NUCLEOTIDE SEQUENCE [MRNA]</scope>
    <scope>VARIANT SER-322</scope>
</reference>
<reference key="2">
    <citation type="journal article" date="1990" name="Proc. Natl. Acad. Sci. U.S.A.">
        <title>Molecular cloning, primary structure, and expression of the human platelet/erythroleukemia cell 12-lipoxygenase.</title>
        <authorList>
            <person name="Funk C.D."/>
            <person name="Furci L."/>
            <person name="Fitzgerald G.A."/>
        </authorList>
    </citation>
    <scope>NUCLEOTIDE SEQUENCE [MRNA]</scope>
    <scope>VARIANT SER-322</scope>
</reference>
<reference key="3">
    <citation type="journal article" date="1990" name="Proc. Natl. Acad. Sci. U.S.A.">
        <title>Cloning of the cDNA for human 12-lipoxygenase.</title>
        <authorList>
            <person name="Izumi T."/>
            <person name="Hoshiko S."/>
            <person name="Raadmark O."/>
            <person name="Samuelsson B."/>
        </authorList>
    </citation>
    <scope>NUCLEOTIDE SEQUENCE [MRNA]</scope>
    <scope>VARIANT ARG-261</scope>
</reference>
<reference key="4">
    <citation type="submission" date="2004-01" db="EMBL/GenBank/DDBJ databases">
        <authorList>
            <consortium name="SeattleSNPs variation discovery resource"/>
        </authorList>
    </citation>
    <scope>NUCLEOTIDE SEQUENCE [GENOMIC DNA]</scope>
    <scope>VARIANTS ARG-261; SER-322 AND HIS-430</scope>
</reference>
<reference key="5">
    <citation type="journal article" date="2006" name="Nature">
        <title>DNA sequence of human chromosome 17 and analysis of rearrangement in the human lineage.</title>
        <authorList>
            <person name="Zody M.C."/>
            <person name="Garber M."/>
            <person name="Adams D.J."/>
            <person name="Sharpe T."/>
            <person name="Harrow J."/>
            <person name="Lupski J.R."/>
            <person name="Nicholson C."/>
            <person name="Searle S.M."/>
            <person name="Wilming L."/>
            <person name="Young S.K."/>
            <person name="Abouelleil A."/>
            <person name="Allen N.R."/>
            <person name="Bi W."/>
            <person name="Bloom T."/>
            <person name="Borowsky M.L."/>
            <person name="Bugalter B.E."/>
            <person name="Butler J."/>
            <person name="Chang J.L."/>
            <person name="Chen C.-K."/>
            <person name="Cook A."/>
            <person name="Corum B."/>
            <person name="Cuomo C.A."/>
            <person name="de Jong P.J."/>
            <person name="DeCaprio D."/>
            <person name="Dewar K."/>
            <person name="FitzGerald M."/>
            <person name="Gilbert J."/>
            <person name="Gibson R."/>
            <person name="Gnerre S."/>
            <person name="Goldstein S."/>
            <person name="Grafham D.V."/>
            <person name="Grocock R."/>
            <person name="Hafez N."/>
            <person name="Hagopian D.S."/>
            <person name="Hart E."/>
            <person name="Norman C.H."/>
            <person name="Humphray S."/>
            <person name="Jaffe D.B."/>
            <person name="Jones M."/>
            <person name="Kamal M."/>
            <person name="Khodiyar V.K."/>
            <person name="LaButti K."/>
            <person name="Laird G."/>
            <person name="Lehoczky J."/>
            <person name="Liu X."/>
            <person name="Lokyitsang T."/>
            <person name="Loveland J."/>
            <person name="Lui A."/>
            <person name="Macdonald P."/>
            <person name="Major J.E."/>
            <person name="Matthews L."/>
            <person name="Mauceli E."/>
            <person name="McCarroll S.A."/>
            <person name="Mihalev A.H."/>
            <person name="Mudge J."/>
            <person name="Nguyen C."/>
            <person name="Nicol R."/>
            <person name="O'Leary S.B."/>
            <person name="Osoegawa K."/>
            <person name="Schwartz D.C."/>
            <person name="Shaw-Smith C."/>
            <person name="Stankiewicz P."/>
            <person name="Steward C."/>
            <person name="Swarbreck D."/>
            <person name="Venkataraman V."/>
            <person name="Whittaker C.A."/>
            <person name="Yang X."/>
            <person name="Zimmer A.R."/>
            <person name="Bradley A."/>
            <person name="Hubbard T."/>
            <person name="Birren B.W."/>
            <person name="Rogers J."/>
            <person name="Lander E.S."/>
            <person name="Nusbaum C."/>
        </authorList>
    </citation>
    <scope>NUCLEOTIDE SEQUENCE [LARGE SCALE GENOMIC DNA]</scope>
</reference>
<reference key="6">
    <citation type="journal article" date="2004" name="Genome Res.">
        <title>The status, quality, and expansion of the NIH full-length cDNA project: the Mammalian Gene Collection (MGC).</title>
        <authorList>
            <consortium name="The MGC Project Team"/>
        </authorList>
    </citation>
    <scope>NUCLEOTIDE SEQUENCE [LARGE SCALE MRNA]</scope>
    <scope>VARIANT ARG-261</scope>
</reference>
<reference key="7">
    <citation type="journal article" date="1992" name="J. Biol. Chem.">
        <title>Structure and chromosomal localization of human arachidonate 12-lipoxygenase gene.</title>
        <authorList>
            <person name="Yoshimoto T."/>
            <person name="Arakawa T."/>
            <person name="Hada T."/>
            <person name="Yamamoto S."/>
            <person name="Takahashi E."/>
        </authorList>
    </citation>
    <scope>NUCLEOTIDE SEQUENCE [GENOMIC DNA] OF 1-112</scope>
</reference>
<reference key="8">
    <citation type="journal article" date="1992" name="Proc. Natl. Acad. Sci. U.S.A.">
        <title>Characterization of human 12-lipoxygenase genes.</title>
        <authorList>
            <person name="Funk C.D."/>
            <person name="Funk L.B."/>
            <person name="Fitzgerald G.A."/>
            <person name="Samuelsson B."/>
        </authorList>
    </citation>
    <scope>NUCLEOTIDE SEQUENCE [GENOMIC DNA] OF 1-45</scope>
</reference>
<reference key="9">
    <citation type="journal article" date="1994" name="Am. J. Physiol.">
        <title>Epidermis contains platelet-type 12-lipoxygenase that is overexpressed in germinal layer keratinocytes in psoriasis.</title>
        <authorList>
            <person name="Hussain H."/>
            <person name="Shornick L.P."/>
            <person name="Shannon V.R."/>
            <person name="Wilson J.D."/>
            <person name="Funk C.D."/>
            <person name="Pentland A.P."/>
            <person name="Holtzman M.J."/>
        </authorList>
    </citation>
    <scope>NUCLEOTIDE SEQUENCE [MRNA] OF 340-427</scope>
    <source>
        <tissue>Skin</tissue>
    </source>
</reference>
<reference key="10">
    <citation type="submission" date="1999-04" db="EMBL/GenBank/DDBJ databases">
        <title>EU-IMAGE: full-insert length sequencing of human cDNA clones.</title>
        <authorList>
            <person name="Persson A.E."/>
            <person name="Lundeberg J."/>
            <person name="Uhlen M."/>
        </authorList>
    </citation>
    <scope>NUCLEOTIDE SEQUENCE [LARGE SCALE MRNA] OF 531-663</scope>
</reference>
<reference key="11">
    <citation type="journal article" date="1991" name="Biochim. Biophys. Acta">
        <title>Catalytic properties of human platelet 12-lipoxygenase as compared with the enzymes of other origins.</title>
        <authorList>
            <person name="Hada T."/>
            <person name="Ueda N."/>
            <person name="Takahashi Y."/>
            <person name="Yamamoto S."/>
        </authorList>
    </citation>
    <scope>CATALYTIC ACTIVITY</scope>
    <scope>PATHWAY</scope>
    <scope>SUBSTRATE SPECIFICITY</scope>
    <scope>BIOPHYSICOCHEMICAL PROPERTIES</scope>
    <scope>FUNCTION</scope>
</reference>
<reference key="12">
    <citation type="journal article" date="1993" name="Biochem. J.">
        <title>Lipoxin synthase activity of human platelet 12-lipoxygenase.</title>
        <authorList>
            <person name="Romano M."/>
            <person name="Chen X.S."/>
            <person name="Takahashi Y."/>
            <person name="Yamamoto S."/>
            <person name="Funk C.D."/>
            <person name="Serhan C.N."/>
        </authorList>
    </citation>
    <scope>FUNCTION IN LIPOXIN SYNTHESIS</scope>
    <scope>CATALYTIC ACTIVITY</scope>
    <scope>BIOPHYSICOCHEMICAL PROPERTIES</scope>
    <scope>REACTION MECHANISM</scope>
</reference>
<reference key="13">
    <citation type="journal article" date="1993" name="Eur. J. Biochem.">
        <title>Purification and characterization of recombinant histidine-tagged human platelet 12-lipoxygenase expressed in a baculovirus/insect cell system.</title>
        <authorList>
            <person name="Chen X.S."/>
            <person name="Brash A.R."/>
            <person name="Funk C.D."/>
        </authorList>
    </citation>
    <scope>CATALYTIC ACTIVITY</scope>
    <scope>BIOPHYSICOCHEMICAL PROPERTIES</scope>
    <scope>SUBCELLULAR LOCATION</scope>
    <scope>FUNCTION</scope>
</reference>
<reference key="14">
    <citation type="journal article" date="1993" name="FASEB J.">
        <title>Structure-function properties of human platelet 12-lipoxygenase: chimeric enzyme and in vitro mutagenesis studies.</title>
        <authorList>
            <person name="Chen X.S."/>
            <person name="Funk C.D."/>
        </authorList>
    </citation>
    <scope>CATALYTIC ACTIVITY</scope>
    <scope>MUTAGENESIS OF HIS-355; HIS-360; HIS-365; HIS-383; HIS-392; LYS-416; ALA-417; VAL-418 AND HIS-540</scope>
    <scope>FUNCTION</scope>
</reference>
<reference key="15">
    <citation type="journal article" date="1996" name="Exp. Cell Res.">
        <title>12-Lipoxygenase in A431 cells: genetic identity, modulation of expression, and intracellular localization.</title>
        <authorList>
            <person name="Hagmann W."/>
            <person name="Gao X."/>
            <person name="Timar J."/>
            <person name="Chen Y.Q."/>
            <person name="Strohmaier A.R."/>
            <person name="Fahrenkopf C."/>
            <person name="Kagawa D."/>
            <person name="Lee M."/>
            <person name="Zacharek A."/>
            <person name="Honn K.V."/>
        </authorList>
    </citation>
    <scope>SUBCELLULAR LOCATION</scope>
    <scope>ACTIVITY REGULATION</scope>
    <scope>INDUCTION</scope>
</reference>
<reference key="16">
    <citation type="journal article" date="1998" name="Cancer Res.">
        <title>Platelet-type 12-lipoxygenase in a human prostate carcinoma stimulates angiogenesis and tumor growth.</title>
        <authorList>
            <person name="Nie D."/>
            <person name="Hillman G.G."/>
            <person name="Geddes T."/>
            <person name="Tang K."/>
            <person name="Pierson C."/>
            <person name="Grignon D.J."/>
            <person name="Honn K.V."/>
        </authorList>
    </citation>
    <scope>FUNCTION IN ANGIOGENESIS</scope>
</reference>
<reference key="17">
    <citation type="journal article" date="2006" name="J. Biol. Chem.">
        <title>Mechanisms regulating tumor angiogenesis by 12-lipoxygenase in prostate cancer cells.</title>
        <authorList>
            <person name="Nie D."/>
            <person name="Krishnamoorthy S."/>
            <person name="Jin R."/>
            <person name="Tang K."/>
            <person name="Chen Y."/>
            <person name="Qiao Y."/>
            <person name="Zacharek A."/>
            <person name="Guo Y."/>
            <person name="Milanini J."/>
            <person name="Pages G."/>
            <person name="Honn K.V."/>
        </authorList>
    </citation>
    <scope>FUNCTION IN ANGIOGENESIS</scope>
</reference>
<reference key="18">
    <citation type="journal article" date="2007" name="Arch. Biochem. Biophys.">
        <title>Oxidative metabolism of lipoamino acids and vanilloids by lipoxygenases and cyclooxygenases.</title>
        <authorList>
            <person name="Prusakiewicz J.J."/>
            <person name="Turman M.V."/>
            <person name="Vila A."/>
            <person name="Ball H.L."/>
            <person name="Al-Mestarihi A.H."/>
            <person name="Di Marzo V."/>
            <person name="Marnett L.J."/>
        </authorList>
    </citation>
    <scope>CATALYTIC ACTIVITY</scope>
    <scope>FUNCTION</scope>
    <scope>BIOPHYSICOCHEMICAL PROPERTIES</scope>
</reference>
<reference key="19">
    <citation type="journal article" date="2008" name="Biochemistry">
        <title>Oxidative metabolism of a fatty acid amide hydrolase-regulated lipid, arachidonoyltaurine.</title>
        <authorList>
            <person name="Turman M.V."/>
            <person name="Kingsley P.J."/>
            <person name="Rouzer C.A."/>
            <person name="Cravatt B.F."/>
            <person name="Marnett L.J."/>
        </authorList>
    </citation>
    <scope>CATALYTIC ACTIVITY</scope>
    <scope>FUNCTION</scope>
</reference>
<reference key="20">
    <citation type="journal article" date="2008" name="FEBS Lett.">
        <title>Reciprocal regulation of 12- and 15-lipoxygenases by UV-irradiation in human keratinocytes.</title>
        <authorList>
            <person name="Yoo H."/>
            <person name="Jeon B."/>
            <person name="Jeon M.S."/>
            <person name="Lee H."/>
            <person name="Kim T.Y."/>
        </authorList>
    </citation>
    <scope>INDUCTION BY UV</scope>
</reference>
<reference key="21">
    <citation type="journal article" date="2012" name="Exp. Cell Res.">
        <title>Up-regulation of 12(S)-lipoxygenase induces a migratory phenotype in colorectal cancer cells.</title>
        <authorList>
            <person name="Klampfl T."/>
            <person name="Bogner E."/>
            <person name="Bednar W."/>
            <person name="Mager L."/>
            <person name="Massudom D."/>
            <person name="Kalny I."/>
            <person name="Heinzle C."/>
            <person name="Berger W."/>
            <person name="Staettner S."/>
            <person name="Karner J."/>
            <person name="Klimpfinger M."/>
            <person name="Fuerstenberger G."/>
            <person name="Krieg P."/>
            <person name="Marian B."/>
        </authorList>
    </citation>
    <scope>FUNCTION IN CELL MIGRATION</scope>
</reference>
<reference key="22">
    <citation type="journal article" date="2013" name="Exp. Cell Res.">
        <title>12S-Lipoxygenase is necessary for human vascular smooth muscle cell survival.</title>
        <authorList>
            <person name="Weisinger G."/>
            <person name="Grafi-Cohen M."/>
            <person name="Hirsh M."/>
            <person name="Knoll E."/>
            <person name="Sharon O."/>
            <person name="Many A."/>
            <person name="Limor R."/>
            <person name="Stern N."/>
        </authorList>
    </citation>
    <scope>FUNCTION IN APOPTOTIC PROCESS</scope>
    <scope>TISSUE SPECIFICITY</scope>
</reference>
<reference key="23">
    <citation type="journal article" date="2012" name="J. Lipid Res.">
        <title>Investigations of human platelet-type 12-lipoxygenase: role of lipoxygenase products in platelet activation.</title>
        <authorList>
            <person name="Ikei K.N."/>
            <person name="Yeung J."/>
            <person name="Apopa P.L."/>
            <person name="Ceja J."/>
            <person name="Vesci J."/>
            <person name="Holman T.R."/>
            <person name="Holinstat M."/>
        </authorList>
    </citation>
    <scope>CATALYTIC ACTIVITY</scope>
    <scope>FUNCTION</scope>
</reference>
<reference key="24">
    <citation type="journal article" date="2013" name="FASEB J.">
        <title>The novel 13S,14S-epoxy-maresin is converted by human macrophages to maresin 1 (MaR1), inhibits leukotriene A4 hydrolase (LTA4H), and shifts macrophage phenotype.</title>
        <authorList>
            <person name="Dalli J."/>
            <person name="Zhu M."/>
            <person name="Vlasenko N.A."/>
            <person name="Deng B."/>
            <person name="Haeggstroem J.Z."/>
            <person name="Petasis N.A."/>
            <person name="Serhan C.N."/>
        </authorList>
    </citation>
    <scope>CATALYTIC ACTIVITY</scope>
    <scope>FUNCTION</scope>
    <scope>ACTIVITY REGULATION</scope>
</reference>
<reference key="25">
    <citation type="journal article" date="2013" name="Redox Biol.">
        <title>Functional characterization of genetic enzyme variations in human lipoxygenases.</title>
        <authorList>
            <person name="Horn T."/>
            <person name="Reddy Kakularam K."/>
            <person name="Anton M."/>
            <person name="Richter C."/>
            <person name="Reddanna P."/>
            <person name="Kuhn H."/>
        </authorList>
    </citation>
    <scope>CATALYTIC ACTIVITY</scope>
    <scope>FUNCTION</scope>
    <scope>VARIANTS HIS-134; LYS-259; ARG-261 AND SER-322</scope>
    <scope>CHARACTERIZATION OF VARIANTS HIS-134; LYS-259; ARG-261 AND SER-322</scope>
</reference>
<reference key="26">
    <citation type="journal article" date="2014" name="PLoS ONE">
        <title>Maresin biosynthesis and identification of maresin 2, a new anti-inflammatory and pro-resolving mediator from human macrophages.</title>
        <authorList>
            <person name="Deng B."/>
            <person name="Wang C.W."/>
            <person name="Arnardottir H.H."/>
            <person name="Li Y."/>
            <person name="Cheng C.Y."/>
            <person name="Dalli J."/>
            <person name="Serhan C.N."/>
        </authorList>
    </citation>
    <scope>CATALYTIC ACTIVITY</scope>
    <scope>FUNCTION</scope>
    <scope>BIOPHYSICOCHEMICAL PROPERTIES</scope>
</reference>
<reference key="27">
    <citation type="journal article" date="2020" name="J. Lipid Res.">
        <title>15-Lipoxygenase-1 biosynthesis of 7S,14S-diHDHA implicates 15-lipoxygenase-2 in biosynthesis of resolvin D5.</title>
        <authorList>
            <person name="Perry S.C."/>
            <person name="Kalyanaraman C."/>
            <person name="Tourdot B.E."/>
            <person name="Conrad W.S."/>
            <person name="Akinkugbe O."/>
            <person name="Freedman J.C."/>
            <person name="Holinstat M."/>
            <person name="Jacobson M.P."/>
            <person name="Holman T.R."/>
        </authorList>
    </citation>
    <scope>FUNCTION</scope>
    <scope>CATALYTIC ACTIVITY</scope>
</reference>
<reference key="28">
    <citation type="submission" date="2009-02" db="PDB data bank">
        <title>Crystal structure of the lipoxygenase domain of human arachidonate 12-lipoxygenase, 12s-type.</title>
        <authorList>
            <consortium name="Structural genomics consortium (SGC)"/>
        </authorList>
    </citation>
    <scope>X-RAY CRYSTALLOGRAPHY (2.6 ANGSTROMS) OF 172-662 IN COMPLEX WITH IRON IONS</scope>
</reference>
<reference key="29">
    <citation type="journal article" date="2004" name="Carcinogenesis">
        <title>Arachidonate lipoxygenase (ALOX) and cyclooxygenase (COX) polymorphisms and colon cancer risk.</title>
        <authorList>
            <person name="Goodman J.E."/>
            <person name="Bowman E.D."/>
            <person name="Chanock S.J."/>
            <person name="Alberg A.J."/>
            <person name="Harris C.C."/>
        </authorList>
    </citation>
    <scope>VARIANT ARG-261</scope>
</reference>
<reference key="30">
    <citation type="journal article" date="2007" name="Carcinogenesis">
        <title>Associations of functional polymorphisms in cyclooxygenase-2 and platelet 12-lipoxygenase with risk of occurrence and advanced disease status of colorectal cancer.</title>
        <authorList>
            <person name="Tan W."/>
            <person name="Wu J."/>
            <person name="Zhang X."/>
            <person name="Guo Y."/>
            <person name="Liu J."/>
            <person name="Sun T."/>
            <person name="Zhang B."/>
            <person name="Zhao D."/>
            <person name="Yang M."/>
            <person name="Yu D."/>
            <person name="Lin D."/>
        </authorList>
    </citation>
    <scope>VARIANT ARG-261</scope>
    <scope>INVOLVEMENT IN COLORECTAL CANCER</scope>
</reference>
<reference key="31">
    <citation type="journal article" date="2007" name="Pharmacogenet. Genomics">
        <title>Platelet 12-lipoxygenase Arg261Gln polymorphism: functional characterization and association with risk of esophageal squamous cell carcinoma in combination with COX-2 polymorphisms.</title>
        <authorList>
            <person name="Guo Y."/>
            <person name="Zhang X."/>
            <person name="Tan W."/>
            <person name="Miao X."/>
            <person name="Sun T."/>
            <person name="Zhao D."/>
            <person name="Lin D."/>
        </authorList>
    </citation>
    <scope>VARIANT ARG-261</scope>
    <scope>INVOLVEMENT IN ESOPHAGEAL CANCER</scope>
</reference>
<evidence type="ECO:0000250" key="1">
    <source>
        <dbReference type="UniProtKB" id="F1LQ70"/>
    </source>
</evidence>
<evidence type="ECO:0000250" key="2">
    <source>
        <dbReference type="UniProtKB" id="P39655"/>
    </source>
</evidence>
<evidence type="ECO:0000255" key="3">
    <source>
        <dbReference type="PROSITE-ProRule" id="PRU00152"/>
    </source>
</evidence>
<evidence type="ECO:0000255" key="4">
    <source>
        <dbReference type="PROSITE-ProRule" id="PRU00726"/>
    </source>
</evidence>
<evidence type="ECO:0000269" key="5">
    <source>
    </source>
</evidence>
<evidence type="ECO:0000269" key="6">
    <source>
    </source>
</evidence>
<evidence type="ECO:0000269" key="7">
    <source>
    </source>
</evidence>
<evidence type="ECO:0000269" key="8">
    <source>
    </source>
</evidence>
<evidence type="ECO:0000269" key="9">
    <source>
    </source>
</evidence>
<evidence type="ECO:0000269" key="10">
    <source>
    </source>
</evidence>
<evidence type="ECO:0000269" key="11">
    <source>
    </source>
</evidence>
<evidence type="ECO:0000269" key="12">
    <source>
    </source>
</evidence>
<evidence type="ECO:0000269" key="13">
    <source>
    </source>
</evidence>
<evidence type="ECO:0000269" key="14">
    <source>
    </source>
</evidence>
<evidence type="ECO:0000269" key="15">
    <source>
    </source>
</evidence>
<evidence type="ECO:0000269" key="16">
    <source>
    </source>
</evidence>
<evidence type="ECO:0000269" key="17">
    <source>
    </source>
</evidence>
<evidence type="ECO:0000269" key="18">
    <source>
    </source>
</evidence>
<evidence type="ECO:0000269" key="19">
    <source>
    </source>
</evidence>
<evidence type="ECO:0000269" key="20">
    <source>
    </source>
</evidence>
<evidence type="ECO:0000269" key="21">
    <source>
    </source>
</evidence>
<evidence type="ECO:0000269" key="22">
    <source>
    </source>
</evidence>
<evidence type="ECO:0000269" key="23">
    <source>
    </source>
</evidence>
<evidence type="ECO:0000269" key="24">
    <source>
    </source>
</evidence>
<evidence type="ECO:0000269" key="25">
    <source>
    </source>
</evidence>
<evidence type="ECO:0000269" key="26">
    <source>
    </source>
</evidence>
<evidence type="ECO:0000269" key="27">
    <source>
    </source>
</evidence>
<evidence type="ECO:0000269" key="28">
    <source>
    </source>
</evidence>
<evidence type="ECO:0000269" key="29">
    <source ref="4"/>
</evidence>
<evidence type="ECO:0000303" key="30">
    <source>
    </source>
</evidence>
<evidence type="ECO:0000305" key="31"/>
<evidence type="ECO:0000305" key="32">
    <source>
    </source>
</evidence>
<evidence type="ECO:0000305" key="33">
    <source>
    </source>
</evidence>
<evidence type="ECO:0000305" key="34">
    <source>
    </source>
</evidence>
<evidence type="ECO:0000305" key="35">
    <source>
    </source>
</evidence>
<evidence type="ECO:0000305" key="36">
    <source>
    </source>
</evidence>
<evidence type="ECO:0000305" key="37">
    <source>
    </source>
</evidence>
<evidence type="ECO:0000305" key="38">
    <source>
    </source>
</evidence>
<evidence type="ECO:0000312" key="39">
    <source>
        <dbReference type="HGNC" id="HGNC:429"/>
    </source>
</evidence>
<evidence type="ECO:0007829" key="40">
    <source>
        <dbReference type="PDB" id="3D3L"/>
    </source>
</evidence>
<evidence type="ECO:0007829" key="41">
    <source>
        <dbReference type="PDB" id="8GHB"/>
    </source>
</evidence>
<evidence type="ECO:0007829" key="42">
    <source>
        <dbReference type="PDB" id="8GHC"/>
    </source>
</evidence>
<evidence type="ECO:0007829" key="43">
    <source>
        <dbReference type="PDB" id="8GHE"/>
    </source>
</evidence>
<comment type="function">
    <text evidence="2 7 10 11 12 15 17 18 19 21 23 24 25 26 28">Catalyzes the regio and stereo-specific incorporation of molecular oxygen into free and esterified polyunsaturated fatty acids generating lipid hydroperoxides that can be further reduced to the corresponding hydroxy species (PubMed:17493578, PubMed:18311922, PubMed:1851637, PubMed:32404334, PubMed:8319693, PubMed:8500694). Mainly converts arachidonate ((5Z,8Z,11Z,14Z)-eicosatetraenoate) to the specific bioactive lipid (12S)-hydroperoxyeicosatetraenoate/(12S)-HPETE (PubMed:17493578, PubMed:22984144, PubMed:24282679, PubMed:8319693, PubMed:8500694). Through the production of bioactive lipids like (12S)-HPETE it regulates different biological processes including platelet activation (PubMed:8319693, PubMed:8500694). It can also catalyze the epoxidation of double bonds of polyunsaturated fatty acids such as (14S)-hydroperoxy-docosahexaenoate/(14S)-HPDHA resulting in the formation of (13S,14S)-epoxy-DHA (PubMed:23504711). Furthermore, it may participate in the sequential oxidations of DHA ((4Z,7Z,10Z,13Z,16Z,19Z)-docosahexaenoate) to generate specialized pro-resolving mediators (SPMs) like resolvin D5 ((7S,17S)-diHPDHA) and (7S,14S)-diHPDHA, that actively down-regulate the immune response and have anti-aggregation properties with platelets (PubMed:32404334). An additional function involves a multistep process by which it transforms leukotriene A4/LTA4 into the bioactive lipids lipoxin A4/LXA4 and lipoxin B4/LXB4, both are vasoactive and LXA4 may regulate neutrophil function via occupancy of specific recognition sites (PubMed:8250832). Can also peroxidize linoleate ((9Z,12Z)-octadecadienoate) to (13S)-hydroperoxyoctadecadienoate/ (13S-HPODE) (By similarity). Due to its role in regulating both the expression of the vascular endothelial growth factor (VEGF, an angiogenic factor involved in the survival and metastasis of solid tumors) and the expression of integrin beta-1 (known to affect tumor cell migration and proliferation), it can be regarded as protumorigenic (PubMed:16638750, PubMed:22237009, PubMed:9751607). Important for cell survival, as it may play a role not only in proliferation but also in the prevention of apoptosis in vascular smooth muscle cells (PubMed:23578768).</text>
</comment>
<comment type="catalytic activity">
    <reaction evidence="10 17 21 25 26">
        <text>(5Z,8Z,11Z,14Z)-eicosatetraenoate + O2 = (12S)-hydroperoxy-(5Z,8Z,10E,14Z)-eicosatetraenoate</text>
        <dbReference type="Rhea" id="RHEA:10428"/>
        <dbReference type="ChEBI" id="CHEBI:15379"/>
        <dbReference type="ChEBI" id="CHEBI:32395"/>
        <dbReference type="ChEBI" id="CHEBI:57444"/>
        <dbReference type="EC" id="1.13.11.31"/>
    </reaction>
    <physiologicalReaction direction="left-to-right" evidence="32 34">
        <dbReference type="Rhea" id="RHEA:10429"/>
    </physiologicalReaction>
</comment>
<comment type="catalytic activity">
    <reaction evidence="10">
        <text>(5Z,8Z,11Z,14Z)-eicosatetraenoate + O2 = (15S)-hydroperoxy-(5Z,8Z,11Z,13E)-eicosatetraenoate</text>
        <dbReference type="Rhea" id="RHEA:16869"/>
        <dbReference type="ChEBI" id="CHEBI:15379"/>
        <dbReference type="ChEBI" id="CHEBI:32395"/>
        <dbReference type="ChEBI" id="CHEBI:57446"/>
        <dbReference type="EC" id="1.13.11.33"/>
    </reaction>
    <physiologicalReaction direction="left-to-right" evidence="32">
        <dbReference type="Rhea" id="RHEA:16870"/>
    </physiologicalReaction>
</comment>
<comment type="catalytic activity">
    <reaction evidence="12 24">
        <text>2 leukotriene A4 + O2 + 2 H2O = 2 lipoxin A4</text>
        <dbReference type="Rhea" id="RHEA:48584"/>
        <dbReference type="ChEBI" id="CHEBI:15377"/>
        <dbReference type="ChEBI" id="CHEBI:15379"/>
        <dbReference type="ChEBI" id="CHEBI:57463"/>
        <dbReference type="ChEBI" id="CHEBI:67026"/>
    </reaction>
    <physiologicalReaction direction="left-to-right" evidence="38">
        <dbReference type="Rhea" id="RHEA:48585"/>
    </physiologicalReaction>
</comment>
<comment type="catalytic activity">
    <reaction evidence="24">
        <text>2 leukotriene A4 + O2 + 2 H2O = 2 lipoxin B4</text>
        <dbReference type="Rhea" id="RHEA:48588"/>
        <dbReference type="ChEBI" id="CHEBI:15377"/>
        <dbReference type="ChEBI" id="CHEBI:15379"/>
        <dbReference type="ChEBI" id="CHEBI:57463"/>
        <dbReference type="ChEBI" id="CHEBI:67031"/>
    </reaction>
    <physiologicalReaction direction="left-to-right" evidence="38">
        <dbReference type="Rhea" id="RHEA:48589"/>
    </physiologicalReaction>
</comment>
<comment type="catalytic activity">
    <reaction evidence="18">
        <text>(14S)-hydroperoxy-(4Z,7Z,10Z,12E,16Z,19Z)-docosahexaenoate = (13S,14S)-epoxy-(4Z,7Z,9E,11E,16Z,19Z)-docosahexaenoate + H2O</text>
        <dbReference type="Rhea" id="RHEA:53532"/>
        <dbReference type="ChEBI" id="CHEBI:15377"/>
        <dbReference type="ChEBI" id="CHEBI:78048"/>
        <dbReference type="ChEBI" id="CHEBI:131958"/>
    </reaction>
    <physiologicalReaction direction="left-to-right" evidence="35">
        <dbReference type="Rhea" id="RHEA:53533"/>
    </physiologicalReaction>
</comment>
<comment type="catalytic activity">
    <reaction evidence="10">
        <text>N-(5Z,8Z,11Z,14Z)-eicosatetraenoyl-L-alanine + O2 = N-(15S)-hydroperoxy-(5Z,8Z,11Z,13E)-eicosatetraenoyl-alanine</text>
        <dbReference type="Rhea" id="RHEA:50184"/>
        <dbReference type="ChEBI" id="CHEBI:15379"/>
        <dbReference type="ChEBI" id="CHEBI:132071"/>
        <dbReference type="ChEBI" id="CHEBI:132077"/>
    </reaction>
    <physiologicalReaction direction="left-to-right" evidence="32">
        <dbReference type="Rhea" id="RHEA:50185"/>
    </physiologicalReaction>
</comment>
<comment type="catalytic activity">
    <reaction evidence="10">
        <text>N-(5Z,8Z,11Z,14Z)-eicosatetraenoyl-L-alanine + O2 = N-(12S)-hydroperoxy-(5Z,8Z,10E,14Z)-eicosatetraenoyl-alanine</text>
        <dbReference type="Rhea" id="RHEA:50172"/>
        <dbReference type="ChEBI" id="CHEBI:15379"/>
        <dbReference type="ChEBI" id="CHEBI:132071"/>
        <dbReference type="ChEBI" id="CHEBI:132074"/>
    </reaction>
    <physiologicalReaction direction="left-to-right" evidence="32">
        <dbReference type="Rhea" id="RHEA:50173"/>
    </physiologicalReaction>
</comment>
<comment type="catalytic activity">
    <reaction evidence="10">
        <text>N-(5Z,8Z,11Z,14Z)-eicosatetraenoyl-gamma-aminobutanoate + O2 = N-(15S)-hydroperoxy-(5Z,8Z,11Z,13E)-eicosatetraenoyl-gamma-aminobutanoate</text>
        <dbReference type="Rhea" id="RHEA:50180"/>
        <dbReference type="ChEBI" id="CHEBI:15379"/>
        <dbReference type="ChEBI" id="CHEBI:132072"/>
        <dbReference type="ChEBI" id="CHEBI:132078"/>
    </reaction>
    <physiologicalReaction direction="left-to-right" evidence="32">
        <dbReference type="Rhea" id="RHEA:50181"/>
    </physiologicalReaction>
</comment>
<comment type="catalytic activity">
    <reaction evidence="10">
        <text>N-(5Z,8Z,11Z,14Z)-eicosatetraenoyl-gamma-aminobutanoate + O2 = N-(12S)-hydroperoxy-(5Z,8Z,10E,14Z)-eicosatetraenoyl-gamma-aminobutanoate</text>
        <dbReference type="Rhea" id="RHEA:50176"/>
        <dbReference type="ChEBI" id="CHEBI:15379"/>
        <dbReference type="ChEBI" id="CHEBI:132072"/>
        <dbReference type="ChEBI" id="CHEBI:132075"/>
    </reaction>
    <physiologicalReaction direction="left-to-right" evidence="32">
        <dbReference type="Rhea" id="RHEA:50177"/>
    </physiologicalReaction>
</comment>
<comment type="catalytic activity">
    <reaction evidence="10">
        <text>N-(5Z,8Z,11Z,14Z)-eicosatetraenoyl-glycine + O2 = N-(15S)-hydroperoxy-(5Z,8Z,11Z,13E)-eicosatetraenoyl-glycine</text>
        <dbReference type="Rhea" id="RHEA:50188"/>
        <dbReference type="ChEBI" id="CHEBI:15379"/>
        <dbReference type="ChEBI" id="CHEBI:59002"/>
        <dbReference type="ChEBI" id="CHEBI:132076"/>
    </reaction>
    <physiologicalReaction direction="left-to-right" evidence="32">
        <dbReference type="Rhea" id="RHEA:50189"/>
    </physiologicalReaction>
</comment>
<comment type="catalytic activity">
    <reaction evidence="10">
        <text>N-(5Z,8Z,11Z,14Z)-eicosatetraenoyl-glycine + O2 = N-(12S)-hydroperoxy-(5Z,8Z,10E,14Z)-eicosatetraenoyl-glycine</text>
        <dbReference type="Rhea" id="RHEA:50168"/>
        <dbReference type="ChEBI" id="CHEBI:15379"/>
        <dbReference type="ChEBI" id="CHEBI:59002"/>
        <dbReference type="ChEBI" id="CHEBI:132073"/>
    </reaction>
    <physiologicalReaction direction="left-to-right" evidence="32">
        <dbReference type="Rhea" id="RHEA:50169"/>
    </physiologicalReaction>
</comment>
<comment type="catalytic activity">
    <reaction evidence="11">
        <text>N-(5Z,8Z,11Z,14Z)-eicosatetraenoyl-taurine + O2 = N-(12S)-hydroperoxy-(5Z,8Z,10E,14Z)-eicosatetraenoyl-taurine</text>
        <dbReference type="Rhea" id="RHEA:50160"/>
        <dbReference type="ChEBI" id="CHEBI:15379"/>
        <dbReference type="ChEBI" id="CHEBI:132060"/>
        <dbReference type="ChEBI" id="CHEBI:132061"/>
    </reaction>
    <physiologicalReaction direction="left-to-right" evidence="33">
        <dbReference type="Rhea" id="RHEA:50161"/>
    </physiologicalReaction>
</comment>
<comment type="catalytic activity">
    <reaction evidence="11">
        <text>N-(5Z,8Z,11Z,14Z)-eicosatetraenoyl-taurine + O2 = N-(15S)-hydroperoxy-(5Z,8Z,11Z,13E)-eicosatetraenoyl-taurine</text>
        <dbReference type="Rhea" id="RHEA:50156"/>
        <dbReference type="ChEBI" id="CHEBI:15379"/>
        <dbReference type="ChEBI" id="CHEBI:132060"/>
        <dbReference type="ChEBI" id="CHEBI:132062"/>
    </reaction>
    <physiologicalReaction direction="left-to-right" evidence="33">
        <dbReference type="Rhea" id="RHEA:50157"/>
    </physiologicalReaction>
</comment>
<comment type="catalytic activity">
    <reaction evidence="22 23">
        <text>(4Z,7Z,10Z,13Z,16Z,19Z)-docosahexaenoate + O2 = (14S)-hydroperoxy-(4Z,7Z,10Z,12E,16Z,19Z)-docosahexaenoate</text>
        <dbReference type="Rhea" id="RHEA:41332"/>
        <dbReference type="ChEBI" id="CHEBI:15379"/>
        <dbReference type="ChEBI" id="CHEBI:77016"/>
        <dbReference type="ChEBI" id="CHEBI:78048"/>
    </reaction>
    <physiologicalReaction direction="left-to-right" evidence="36 37">
        <dbReference type="Rhea" id="RHEA:41333"/>
    </physiologicalReaction>
</comment>
<comment type="catalytic activity">
    <reaction evidence="23">
        <text>(7S)-hydroperoxy-(4Z,8E,10Z,13Z,16Z,19Z)-docosahexaenoate + O2 = (7S,14S)-dihydroperoxy-(4Z,8E,10Z,12E,16Z,19Z)-docosahexaenoate</text>
        <dbReference type="Rhea" id="RHEA:64724"/>
        <dbReference type="ChEBI" id="CHEBI:15379"/>
        <dbReference type="ChEBI" id="CHEBI:156049"/>
        <dbReference type="ChEBI" id="CHEBI:156082"/>
    </reaction>
    <physiologicalReaction direction="left-to-right" evidence="37">
        <dbReference type="Rhea" id="RHEA:64725"/>
    </physiologicalReaction>
</comment>
<comment type="catalytic activity">
    <reaction evidence="23">
        <text>(7S)-hydroperoxy-(4Z,8E,10Z,13Z,16Z,19Z)-docosahexaenoate + O2 = (7S,17S)-dihydroperoxy-(4Z,8E,10Z,13Z,15E,19Z)-docosahexaenoate</text>
        <dbReference type="Rhea" id="RHEA:64728"/>
        <dbReference type="ChEBI" id="CHEBI:15379"/>
        <dbReference type="ChEBI" id="CHEBI:140349"/>
        <dbReference type="ChEBI" id="CHEBI:156049"/>
    </reaction>
    <physiologicalReaction direction="left-to-right" evidence="37">
        <dbReference type="Rhea" id="RHEA:64729"/>
    </physiologicalReaction>
</comment>
<comment type="catalytic activity">
    <reaction evidence="17">
        <text>(5Z,8Z,11Z,14Z,17Z)-eicosapentaenoate + O2 = (12S)-hydroperoxy-(5Z,8Z,10E,14Z,17Z)-eicosapentaenoate</text>
        <dbReference type="Rhea" id="RHEA:48704"/>
        <dbReference type="ChEBI" id="CHEBI:15379"/>
        <dbReference type="ChEBI" id="CHEBI:58562"/>
        <dbReference type="ChEBI" id="CHEBI:90772"/>
    </reaction>
    <physiologicalReaction direction="left-to-right" evidence="34">
        <dbReference type="Rhea" id="RHEA:48705"/>
    </physiologicalReaction>
</comment>
<comment type="catalytic activity">
    <reaction evidence="17">
        <text>(8Z,11Z,14Z)-eicosatrienoate + O2 = (12S)-hydroperoxy-(8Z,10E,14Z)-eicosatrienoate</text>
        <dbReference type="Rhea" id="RHEA:41328"/>
        <dbReference type="ChEBI" id="CHEBI:15379"/>
        <dbReference type="ChEBI" id="CHEBI:71589"/>
        <dbReference type="ChEBI" id="CHEBI:78047"/>
    </reaction>
    <physiologicalReaction direction="left-to-right" evidence="34">
        <dbReference type="Rhea" id="RHEA:41329"/>
    </physiologicalReaction>
</comment>
<comment type="catalytic activity">
    <reaction>
        <text>(9Z,12Z)-octadecadienoate + O2 = (13S)-hydroperoxy-(9Z,11E)-octadecadienoate</text>
        <dbReference type="Rhea" id="RHEA:22780"/>
        <dbReference type="ChEBI" id="CHEBI:15379"/>
        <dbReference type="ChEBI" id="CHEBI:30245"/>
        <dbReference type="ChEBI" id="CHEBI:57466"/>
    </reaction>
    <physiologicalReaction direction="left-to-right" evidence="2">
        <dbReference type="Rhea" id="RHEA:22781"/>
    </physiologicalReaction>
</comment>
<comment type="catalytic activity">
    <reaction evidence="2">
        <text>(5Z,8Z,11Z)-eicosatrienoate + O2 = (12S)-hydroperoxy-(5Z,8Z,10E)-eicosatrienoate</text>
        <dbReference type="Rhea" id="RHEA:41324"/>
        <dbReference type="ChEBI" id="CHEBI:15379"/>
        <dbReference type="ChEBI" id="CHEBI:78043"/>
        <dbReference type="ChEBI" id="CHEBI:78046"/>
    </reaction>
    <physiologicalReaction direction="left-to-right" evidence="2">
        <dbReference type="Rhea" id="RHEA:41325"/>
    </physiologicalReaction>
</comment>
<comment type="catalytic activity">
    <reaction evidence="2">
        <text>(14R,15S)-epoxy-(5Z,8Z,11Z)-eicosatrienoate + O2 = (12S)-hydroperoxy-(14R,15S)-epoxy-(5Z,8Z,10E)-eicosatrienoate</text>
        <dbReference type="Rhea" id="RHEA:50276"/>
        <dbReference type="ChEBI" id="CHEBI:15379"/>
        <dbReference type="ChEBI" id="CHEBI:131965"/>
        <dbReference type="ChEBI" id="CHEBI:132063"/>
    </reaction>
    <physiologicalReaction direction="left-to-right" evidence="2">
        <dbReference type="Rhea" id="RHEA:50277"/>
    </physiologicalReaction>
</comment>
<comment type="catalytic activity">
    <reaction evidence="2">
        <text>(14S,15R)-epoxy-(5Z,8Z,11Z)-eicosatrienoate + O2 = (12S)-hydroperoxy-(14S,15R)-epoxy-(5Z,8Z,10E)-eicosatrienoate</text>
        <dbReference type="Rhea" id="RHEA:50284"/>
        <dbReference type="ChEBI" id="CHEBI:15379"/>
        <dbReference type="ChEBI" id="CHEBI:131964"/>
        <dbReference type="ChEBI" id="CHEBI:132065"/>
    </reaction>
    <physiologicalReaction direction="left-to-right" evidence="2">
        <dbReference type="Rhea" id="RHEA:50285"/>
    </physiologicalReaction>
</comment>
<comment type="cofactor">
    <cofactor>
        <name>Fe cation</name>
        <dbReference type="ChEBI" id="CHEBI:24875"/>
    </cofactor>
    <text>Binds 1 Fe cation per subunit.</text>
</comment>
<comment type="activity regulation">
    <text evidence="2 18 27">Activated by EGF (PubMed:8912711). Arachidonic acid conversion is inhibited by (13S,14S)-epoxy-(4Z,7Z,9E,11E,16Z,19Z)-docosahexaenoate (13S,14S-epoxy-DHA) (PubMed:23504711). Arachidonate 12-lipoxygenase activity is decreased when PH decreases from 7.4 to 6 (By similarity).</text>
</comment>
<comment type="biophysicochemical properties">
    <kinetics>
        <KM evidence="12">8 uM for arachidonate (at pH 7.0 and 37 degrees Celsius)</KM>
        <KM evidence="25">10 uM for arachidonate (at pH 8.0 and 25 degrees Celsius)</KM>
        <KM evidence="24">6.2 uM for arachidonate (at pH 7.4)</KM>
        <KM evidence="25">9 uM for linoleate (at pH 8.0 and 25 degrees Celsius)</KM>
        <KM evidence="24">7.9 uM for leukotriene A4 (at pH 7.4)</KM>
        <KM evidence="12">3 uM for eicosa-5,8,11,14,17-pentaenoate (at pH 7.0 and 37 degrees Celsius)</KM>
        <KM evidence="12">35 uM for eicosa-8,11,14-trienoate (at pH 7.0 and 37 degrees Celsius)</KM>
        <KM evidence="24">14.3 uM for 5,6-epoxy-8,11,14-eicosatrienoate (at pH 7.4)</KM>
        <KM evidence="10">9.5 uM for arachidonic acid</KM>
        <KM evidence="10">10.1 uM for N-arachidonoylglycine</KM>
        <KM evidence="10">15.7 uM for N-arachidonoyl-L-alanine</KM>
        <KM evidence="10">10.9 uM for N-arachidonoyl-gamma-aminobutyric acid</KM>
        <KM evidence="22">9.7 uM for arachidonic acid</KM>
        <KM evidence="22">5.1 uM for docosahexaenoate</KM>
        <KM evidence="22">12.6 uM for arachidonic acid (in presence of calcium dichloride)</KM>
        <KM evidence="22">7.1 uM for docosahexaenoate (in presence of calcium dichloride)</KM>
        <Vmax evidence="25">3.0 umol/min/mg enzyme with arachidonate as substrate (at pH 8.0 and 25 degrees Celsius)</Vmax>
        <Vmax evidence="24">1.057 umol/min/mg enzyme with arachidonate as substrate (at pH 7.4)</Vmax>
        <Vmax evidence="25">0.0375 umol/min/mg enzyme with linoleate as substrate (at pH 8.0 and 25 degrees Celsius)</Vmax>
        <Vmax evidence="24">0.025 umol/min/mg enzyme with leukotriene A4 as substrate (at pH 7.4)</Vmax>
        <Vmax evidence="24">0.985 umol/min/mg enzyme with 5,6-epoxy-8,11,14-eicosatrienoate as substrate (at pH 7.4)</Vmax>
    </kinetics>
    <phDependence>
        <text evidence="24 25">Optimum pH is 7.5-8.0 (for arachidonate 12-lipoxygenase activity).</text>
    </phDependence>
</comment>
<comment type="pathway">
    <text evidence="12">Lipid metabolism; hydroperoxy eicosatetraenoic acid biosynthesis.</text>
</comment>
<comment type="interaction">
    <interactant intactId="EBI-1633210">
        <id>P18054</id>
    </interactant>
    <interactant intactId="EBI-702187">
        <id>P13647</id>
        <label>KRT5</label>
    </interactant>
    <organismsDiffer>false</organismsDiffer>
    <experiments>7</experiments>
</comment>
<comment type="interaction">
    <interactant intactId="EBI-1633210">
        <id>P18054</id>
    </interactant>
    <interactant intactId="EBI-351935">
        <id>P02545</id>
        <label>LMNA</label>
    </interactant>
    <organismsDiffer>false</organismsDiffer>
    <experiments>4</experiments>
</comment>
<comment type="subcellular location">
    <subcellularLocation>
        <location>Cytoplasm</location>
        <location>Cytosol</location>
    </subcellularLocation>
    <subcellularLocation>
        <location>Membrane</location>
    </subcellularLocation>
    <text>Membrane association is stimulated by EGF.</text>
</comment>
<comment type="tissue specificity">
    <text evidence="19">Expressed in vascular smooth muscle cells.</text>
</comment>
<comment type="induction">
    <text evidence="13 27">Down-regulated upon starvation, by UV-irradiation and 15-lipoxygenase metabolites.</text>
</comment>
<comment type="disease" evidence="9">
    <disease id="DI-01537">
        <name>Esophageal cancer</name>
        <acronym>ESCR</acronym>
        <description>A malignancy of the esophagus. The most common types are esophageal squamous cell carcinoma and adenocarcinoma. Cancer of the esophagus remains a devastating disease because it is usually not detected until it has progressed to an advanced incurable stage.</description>
        <dbReference type="MIM" id="133239"/>
    </disease>
    <text evidence="9">Disease susceptibility may be associated with variants affecting the gene represented in this entry. Gln at position 261 may confer interindividual susceptibility to esophageal cancer (PubMed:17460548).</text>
</comment>
<comment type="disease" evidence="8">
    <disease id="DI-01359">
        <name>Colorectal cancer</name>
        <acronym>CRC</acronym>
        <description>A complex disease characterized by malignant lesions arising from the inner wall of the large intestine (the colon) and the rectum. Genetic alterations are often associated with progression from premalignant lesion (adenoma) to invasive adenocarcinoma. Risk factors for cancer of the colon and rectum include colon polyps, long-standing ulcerative colitis, and genetic family history.</description>
        <dbReference type="MIM" id="114500"/>
    </disease>
    <text evidence="9">Disease susceptibility may be associated with variants affecting the gene represented in this entry. Gln at position 261 may confer interindividual susceptibility to colorectal cancer (PubMed:17460548).</text>
</comment>
<comment type="similarity">
    <text evidence="31">Belongs to the lipoxygenase family.</text>
</comment>
<comment type="online information" name="Atlas of Genetics and Cytogenetics in Oncology and Haematology">
    <link uri="https://atlasgeneticsoncology.org/gene/620/ALOX12"/>
</comment>
<keyword id="KW-0002">3D-structure</keyword>
<keyword id="KW-0963">Cytoplasm</keyword>
<keyword id="KW-0223">Dioxygenase</keyword>
<keyword id="KW-0276">Fatty acid metabolism</keyword>
<keyword id="KW-0378">Hydrolase</keyword>
<keyword id="KW-0408">Iron</keyword>
<keyword id="KW-0443">Lipid metabolism</keyword>
<keyword id="KW-0472">Membrane</keyword>
<keyword id="KW-0479">Metal-binding</keyword>
<keyword id="KW-0560">Oxidoreductase</keyword>
<keyword id="KW-0597">Phosphoprotein</keyword>
<keyword id="KW-1267">Proteomics identification</keyword>
<keyword id="KW-1185">Reference proteome</keyword>
<sequence>MGRYRIRVATGAWLFSGSYNRVQLWLVGTRGEAELELQLRPARGEEEEFDHDVAEDLGLLQFVRLRKHHWLVDDAWFCDRITVQGPGACAEVAFPCYRWVQGEDILSLPEGTARLPGDNALDMFQKHREKELKDRQQIYCWATWKEGLPLTIAADRKDDLPPNMRFHEEKRLDFEWTLKAGALEMALKRVYTLLSSWNCLEDFDQIFWGQKSALAEKVRQCWQDDELFSYQFLNGANPMLLRRSTSLPSRLVLPSGMEELQAQLEKELQNGSLFEADFILLDGIPANVIRGEKQYLAAPLVMLKMEPNGKLQPMVIQIQPPNPSSPTPTLFLPSDPPLAWLLAKSWVRNSDFQLHEIQYHLLNTHLVAEVIAVATMRCLPGLHPIFKFLIPHIRYTMEINTRARTQLISDGGIFDKAVSTGGGGHVQLLRRAAAQLTYCSLCPPDDLADRGLLGLPGALYAHDALRLWEIIARYVEGIVHLFYQRDDIVKGDPELQAWCREITEVGLCQAQDRGFPVSFQSQSQLCHFLTMCVFTCTAQHAAINQGQLDWYAWVPNAPCTMRMPPPTTKEDVTMATVMGSLPDVRQACLQMAISWHLSRRQPDMVPLGHHKEKYFSGPKPKAVLNQFRTDLEKLEKEITARNEQLDWPYEYLKPSCIENSVTI</sequence>
<protein>
    <recommendedName>
        <fullName evidence="31">Polyunsaturated fatty acid lipoxygenase ALOX12</fullName>
        <ecNumber evidence="10">1.13.11.-</ecNumber>
    </recommendedName>
    <alternativeName>
        <fullName evidence="32">Arachidonate (12S)-lipoxygenase</fullName>
        <shortName>12S-LOX</shortName>
        <shortName evidence="30">12S-lipoxygenase</shortName>
        <ecNumber evidence="10 17 21 26">1.13.11.31</ecNumber>
    </alternativeName>
    <alternativeName>
        <fullName evidence="32">Arachidonate (15S)-lipoxygenase</fullName>
        <ecNumber evidence="10">1.13.11.33</ecNumber>
    </alternativeName>
    <alternativeName>
        <fullName evidence="2">Linoleate (13S)-lipoxygenase</fullName>
    </alternativeName>
    <alternativeName>
        <fullName>Lipoxin synthase 12-LO</fullName>
        <ecNumber>3.3.2.-</ecNumber>
    </alternativeName>
    <alternativeName>
        <fullName>Platelet-type lipoxygenase 12</fullName>
    </alternativeName>
</protein>
<feature type="chain" id="PRO_0000220682" description="Polyunsaturated fatty acid lipoxygenase ALOX12">
    <location>
        <begin position="1"/>
        <end position="663"/>
    </location>
</feature>
<feature type="domain" description="PLAT" evidence="3">
    <location>
        <begin position="2"/>
        <end position="114"/>
    </location>
</feature>
<feature type="domain" description="Lipoxygenase" evidence="4">
    <location>
        <begin position="115"/>
        <end position="663"/>
    </location>
</feature>
<feature type="binding site">
    <location>
        <position position="360"/>
    </location>
    <ligand>
        <name>Fe cation</name>
        <dbReference type="ChEBI" id="CHEBI:24875"/>
        <note>catalytic</note>
    </ligand>
</feature>
<feature type="binding site">
    <location>
        <position position="365"/>
    </location>
    <ligand>
        <name>Fe cation</name>
        <dbReference type="ChEBI" id="CHEBI:24875"/>
        <note>catalytic</note>
    </ligand>
</feature>
<feature type="binding site">
    <location>
        <position position="540"/>
    </location>
    <ligand>
        <name>Fe cation</name>
        <dbReference type="ChEBI" id="CHEBI:24875"/>
        <note>catalytic</note>
    </ligand>
</feature>
<feature type="binding site" evidence="4">
    <location>
        <position position="544"/>
    </location>
    <ligand>
        <name>Fe cation</name>
        <dbReference type="ChEBI" id="CHEBI:24875"/>
        <note>catalytic</note>
    </ligand>
</feature>
<feature type="binding site" evidence="4">
    <location>
        <position position="663"/>
    </location>
    <ligand>
        <name>Fe cation</name>
        <dbReference type="ChEBI" id="CHEBI:24875"/>
        <note>catalytic</note>
    </ligand>
</feature>
<feature type="modified residue" description="Phosphoserine" evidence="1">
    <location>
        <position position="246"/>
    </location>
</feature>
<feature type="sequence variant" id="VAR_082032" description="Does not affect lipoxygenase activity; dbSNP:rs114985038." evidence="21">
    <original>D</original>
    <variation>H</variation>
    <location>
        <position position="134"/>
    </location>
</feature>
<feature type="sequence variant" id="VAR_030471" description="Does not affect lipoxygenase activity; dbSNP:rs4987104." evidence="21">
    <original>E</original>
    <variation>K</variation>
    <location>
        <position position="259"/>
    </location>
</feature>
<feature type="sequence variant" id="VAR_018743" description="Does not affect lipoxygenase activity; dbSNP:rs1126667." evidence="5 6 8 9 14 21 29">
    <original>Q</original>
    <variation>R</variation>
    <location>
        <position position="261"/>
    </location>
</feature>
<feature type="sequence variant" id="VAR_004279">
    <original>A</original>
    <variation>T</variation>
    <location>
        <position position="298"/>
    </location>
</feature>
<feature type="sequence variant" id="VAR_018744" description="Does not affect lipoxygenase activity; dbSNP:rs434473." evidence="16 20 21 29">
    <original>N</original>
    <variation>S</variation>
    <location>
        <position position="322"/>
    </location>
</feature>
<feature type="sequence variant" id="VAR_018745" description="In dbSNP:rs11571342." evidence="29">
    <original>R</original>
    <variation>H</variation>
    <location>
        <position position="430"/>
    </location>
</feature>
<feature type="mutagenesis site" description="No effect on arachidonate 12(S)-lipoxygenase activity." evidence="26">
    <original>H</original>
    <variation>Q</variation>
    <location>
        <position position="355"/>
    </location>
</feature>
<feature type="mutagenesis site" description="Complete loss of arachidonate 12(S)-lipoxygenase activity." evidence="26">
    <original>H</original>
    <variation>Q</variation>
    <variation>Y</variation>
    <location>
        <position position="360"/>
    </location>
</feature>
<feature type="mutagenesis site" description="Complete loss of arachidonate 12(S)-lipoxygenase activity." evidence="26">
    <original>H</original>
    <variation>Q</variation>
    <location>
        <position position="365"/>
    </location>
</feature>
<feature type="mutagenesis site" description="Alteredarachidonate 12(S)-lipoxygenase activity and protein expression." evidence="26">
    <original>H</original>
    <variation>Q</variation>
    <location>
        <position position="383"/>
    </location>
</feature>
<feature type="mutagenesis site" description="No effect on arachidonate 12(S)-lipoxygenase activity." evidence="26">
    <original>H</original>
    <variation>Q</variation>
    <location>
        <position position="392"/>
    </location>
</feature>
<feature type="mutagenesis site" description="Reduced arachidonate 12(S)-lipoxygenase activity. No effect on the stereoselectivity of the oxygenation reaction." evidence="26">
    <original>K</original>
    <variation>Q</variation>
    <location>
        <position position="416"/>
    </location>
</feature>
<feature type="mutagenesis site" description="Reduced arachidonate 12(S)-lipoxygenase activity. Alters the stereoselectivity of the oxygenation reaction." evidence="26">
    <original>A</original>
    <variation>I</variation>
    <location>
        <position position="417"/>
    </location>
</feature>
<feature type="mutagenesis site" description="No effect onarachidonate 12(S)-lipoxygenase activity. No effect on the stereoselectivity of the oxygenation reaction." evidence="26">
    <original>V</original>
    <variation>M</variation>
    <location>
        <position position="418"/>
    </location>
</feature>
<feature type="mutagenesis site" description="Complete loss of arachidonate 12(S)-lipoxygenase activity." evidence="26">
    <original>H</original>
    <variation>Q</variation>
    <location>
        <position position="540"/>
    </location>
</feature>
<feature type="sequence conflict" description="In Ref. 1; AAA51533." evidence="31" ref="1">
    <original>RVYT</original>
    <variation>PCLH</variation>
    <location>
        <begin position="189"/>
        <end position="192"/>
    </location>
</feature>
<feature type="sequence conflict" description="In Ref. 1; AAA51533." evidence="31" ref="1">
    <original>S</original>
    <variation>C</variation>
    <location>
        <position position="345"/>
    </location>
</feature>
<feature type="sequence conflict" description="In Ref. 2; AAA60056." evidence="31" ref="2">
    <original>L</original>
    <variation>P</variation>
    <location>
        <position position="389"/>
    </location>
</feature>
<feature type="strand" evidence="43">
    <location>
        <begin position="3"/>
        <end position="14"/>
    </location>
</feature>
<feature type="strand" evidence="43">
    <location>
        <begin position="16"/>
        <end position="18"/>
    </location>
</feature>
<feature type="strand" evidence="43">
    <location>
        <begin position="20"/>
        <end position="30"/>
    </location>
</feature>
<feature type="strand" evidence="43">
    <location>
        <begin position="32"/>
        <end position="39"/>
    </location>
</feature>
<feature type="strand" evidence="43">
    <location>
        <begin position="47"/>
        <end position="52"/>
    </location>
</feature>
<feature type="strand" evidence="43">
    <location>
        <begin position="59"/>
        <end position="69"/>
    </location>
</feature>
<feature type="strand" evidence="43">
    <location>
        <begin position="75"/>
        <end position="84"/>
    </location>
</feature>
<feature type="strand" evidence="43">
    <location>
        <begin position="86"/>
        <end position="88"/>
    </location>
</feature>
<feature type="strand" evidence="43">
    <location>
        <begin position="92"/>
        <end position="99"/>
    </location>
</feature>
<feature type="strand" evidence="43">
    <location>
        <begin position="102"/>
        <end position="104"/>
    </location>
</feature>
<feature type="strand" evidence="43">
    <location>
        <begin position="106"/>
        <end position="109"/>
    </location>
</feature>
<feature type="helix" evidence="43">
    <location>
        <begin position="123"/>
        <end position="138"/>
    </location>
</feature>
<feature type="strand" evidence="43">
    <location>
        <begin position="151"/>
        <end position="153"/>
    </location>
</feature>
<feature type="helix" evidence="43">
    <location>
        <begin position="157"/>
        <end position="159"/>
    </location>
</feature>
<feature type="helix" evidence="43">
    <location>
        <begin position="162"/>
        <end position="164"/>
    </location>
</feature>
<feature type="helix" evidence="43">
    <location>
        <begin position="168"/>
        <end position="191"/>
    </location>
</feature>
<feature type="strand" evidence="43">
    <location>
        <begin position="193"/>
        <end position="195"/>
    </location>
</feature>
<feature type="helix" evidence="43">
    <location>
        <begin position="200"/>
        <end position="205"/>
    </location>
</feature>
<feature type="strand" evidence="43">
    <location>
        <begin position="208"/>
        <end position="210"/>
    </location>
</feature>
<feature type="helix" evidence="43">
    <location>
        <begin position="213"/>
        <end position="221"/>
    </location>
</feature>
<feature type="helix" evidence="43">
    <location>
        <begin position="225"/>
        <end position="234"/>
    </location>
</feature>
<feature type="helix" evidence="43">
    <location>
        <begin position="258"/>
        <end position="269"/>
    </location>
</feature>
<feature type="strand" evidence="43">
    <location>
        <begin position="273"/>
        <end position="277"/>
    </location>
</feature>
<feature type="helix" evidence="43">
    <location>
        <begin position="279"/>
        <end position="281"/>
    </location>
</feature>
<feature type="strand" evidence="43">
    <location>
        <begin position="300"/>
        <end position="305"/>
    </location>
</feature>
<feature type="strand" evidence="43">
    <location>
        <begin position="311"/>
        <end position="317"/>
    </location>
</feature>
<feature type="strand" evidence="40">
    <location>
        <begin position="325"/>
        <end position="327"/>
    </location>
</feature>
<feature type="strand" evidence="42">
    <location>
        <begin position="333"/>
        <end position="335"/>
    </location>
</feature>
<feature type="helix" evidence="43">
    <location>
        <begin position="337"/>
        <end position="357"/>
    </location>
</feature>
<feature type="helix" evidence="43">
    <location>
        <begin position="358"/>
        <end position="364"/>
    </location>
</feature>
<feature type="helix" evidence="43">
    <location>
        <begin position="365"/>
        <end position="378"/>
    </location>
</feature>
<feature type="helix" evidence="43">
    <location>
        <begin position="384"/>
        <end position="389"/>
    </location>
</feature>
<feature type="helix" evidence="43">
    <location>
        <begin position="390"/>
        <end position="393"/>
    </location>
</feature>
<feature type="helix" evidence="43">
    <location>
        <begin position="396"/>
        <end position="406"/>
    </location>
</feature>
<feature type="helix" evidence="43">
    <location>
        <begin position="414"/>
        <end position="417"/>
    </location>
</feature>
<feature type="turn" evidence="43">
    <location>
        <begin position="419"/>
        <end position="423"/>
    </location>
</feature>
<feature type="helix" evidence="43">
    <location>
        <begin position="424"/>
        <end position="434"/>
    </location>
</feature>
<feature type="turn" evidence="43">
    <location>
        <begin position="438"/>
        <end position="441"/>
    </location>
</feature>
<feature type="helix" evidence="43">
    <location>
        <begin position="443"/>
        <end position="449"/>
    </location>
</feature>
<feature type="helix" evidence="43">
    <location>
        <begin position="459"/>
        <end position="482"/>
    </location>
</feature>
<feature type="helix" evidence="43">
    <location>
        <begin position="486"/>
        <end position="490"/>
    </location>
</feature>
<feature type="helix" evidence="43">
    <location>
        <begin position="493"/>
        <end position="503"/>
    </location>
</feature>
<feature type="turn" evidence="43">
    <location>
        <begin position="504"/>
        <end position="508"/>
    </location>
</feature>
<feature type="turn" evidence="43">
    <location>
        <begin position="510"/>
        <end position="514"/>
    </location>
</feature>
<feature type="helix" evidence="43">
    <location>
        <begin position="522"/>
        <end position="536"/>
    </location>
</feature>
<feature type="helix" evidence="43">
    <location>
        <begin position="538"/>
        <end position="544"/>
    </location>
</feature>
<feature type="helix" evidence="43">
    <location>
        <begin position="547"/>
        <end position="551"/>
    </location>
</feature>
<feature type="helix" evidence="43">
    <location>
        <begin position="554"/>
        <end position="556"/>
    </location>
</feature>
<feature type="strand" evidence="41">
    <location>
        <begin position="561"/>
        <end position="563"/>
    </location>
</feature>
<feature type="strand" evidence="40">
    <location>
        <begin position="567"/>
        <end position="571"/>
    </location>
</feature>
<feature type="helix" evidence="43">
    <location>
        <begin position="574"/>
        <end position="580"/>
    </location>
</feature>
<feature type="helix" evidence="43">
    <location>
        <begin position="584"/>
        <end position="598"/>
    </location>
</feature>
<feature type="helix" evidence="43">
    <location>
        <begin position="618"/>
        <end position="642"/>
    </location>
</feature>
<feature type="turn" evidence="43">
    <location>
        <begin position="654"/>
        <end position="656"/>
    </location>
</feature>
<feature type="strand" evidence="43">
    <location>
        <begin position="657"/>
        <end position="660"/>
    </location>
</feature>